<comment type="similarity">
    <text evidence="2">Belongs to the TMA7 family.</text>
</comment>
<keyword id="KW-1185">Reference proteome</keyword>
<protein>
    <recommendedName>
        <fullName evidence="2">Translation machinery-associated protein 7B</fullName>
    </recommendedName>
</protein>
<reference key="1">
    <citation type="journal article" date="1999" name="Nature">
        <title>The DNA sequence of human chromosome 22.</title>
        <authorList>
            <person name="Dunham I."/>
            <person name="Hunt A.R."/>
            <person name="Collins J.E."/>
            <person name="Bruskiewich R."/>
            <person name="Beare D.M."/>
            <person name="Clamp M."/>
            <person name="Smink L.J."/>
            <person name="Ainscough R."/>
            <person name="Almeida J.P."/>
            <person name="Babbage A.K."/>
            <person name="Bagguley C."/>
            <person name="Bailey J."/>
            <person name="Barlow K.F."/>
            <person name="Bates K.N."/>
            <person name="Beasley O.P."/>
            <person name="Bird C.P."/>
            <person name="Blakey S.E."/>
            <person name="Bridgeman A.M."/>
            <person name="Buck D."/>
            <person name="Burgess J."/>
            <person name="Burrill W.D."/>
            <person name="Burton J."/>
            <person name="Carder C."/>
            <person name="Carter N.P."/>
            <person name="Chen Y."/>
            <person name="Clark G."/>
            <person name="Clegg S.M."/>
            <person name="Cobley V.E."/>
            <person name="Cole C.G."/>
            <person name="Collier R.E."/>
            <person name="Connor R."/>
            <person name="Conroy D."/>
            <person name="Corby N.R."/>
            <person name="Coville G.J."/>
            <person name="Cox A.V."/>
            <person name="Davis J."/>
            <person name="Dawson E."/>
            <person name="Dhami P.D."/>
            <person name="Dockree C."/>
            <person name="Dodsworth S.J."/>
            <person name="Durbin R.M."/>
            <person name="Ellington A.G."/>
            <person name="Evans K.L."/>
            <person name="Fey J.M."/>
            <person name="Fleming K."/>
            <person name="French L."/>
            <person name="Garner A.A."/>
            <person name="Gilbert J.G.R."/>
            <person name="Goward M.E."/>
            <person name="Grafham D.V."/>
            <person name="Griffiths M.N.D."/>
            <person name="Hall C."/>
            <person name="Hall R.E."/>
            <person name="Hall-Tamlyn G."/>
            <person name="Heathcott R.W."/>
            <person name="Ho S."/>
            <person name="Holmes S."/>
            <person name="Hunt S.E."/>
            <person name="Jones M.C."/>
            <person name="Kershaw J."/>
            <person name="Kimberley A.M."/>
            <person name="King A."/>
            <person name="Laird G.K."/>
            <person name="Langford C.F."/>
            <person name="Leversha M.A."/>
            <person name="Lloyd C."/>
            <person name="Lloyd D.M."/>
            <person name="Martyn I.D."/>
            <person name="Mashreghi-Mohammadi M."/>
            <person name="Matthews L.H."/>
            <person name="Mccann O.T."/>
            <person name="Mcclay J."/>
            <person name="Mclaren S."/>
            <person name="McMurray A.A."/>
            <person name="Milne S.A."/>
            <person name="Mortimore B.J."/>
            <person name="Odell C.N."/>
            <person name="Pavitt R."/>
            <person name="Pearce A.V."/>
            <person name="Pearson D."/>
            <person name="Phillimore B.J.C.T."/>
            <person name="Phillips S.H."/>
            <person name="Plumb R.W."/>
            <person name="Ramsay H."/>
            <person name="Ramsey Y."/>
            <person name="Rogers L."/>
            <person name="Ross M.T."/>
            <person name="Scott C.E."/>
            <person name="Sehra H.K."/>
            <person name="Skuce C.D."/>
            <person name="Smalley S."/>
            <person name="Smith M.L."/>
            <person name="Soderlund C."/>
            <person name="Spragon L."/>
            <person name="Steward C.A."/>
            <person name="Sulston J.E."/>
            <person name="Swann R.M."/>
            <person name="Vaudin M."/>
            <person name="Wall M."/>
            <person name="Wallis J.M."/>
            <person name="Whiteley M.N."/>
            <person name="Willey D.L."/>
            <person name="Williams L."/>
            <person name="Williams S.A."/>
            <person name="Williamson H."/>
            <person name="Wilmer T.E."/>
            <person name="Wilming L."/>
            <person name="Wright C.L."/>
            <person name="Hubbard T."/>
            <person name="Bentley D.R."/>
            <person name="Beck S."/>
            <person name="Rogers J."/>
            <person name="Shimizu N."/>
            <person name="Minoshima S."/>
            <person name="Kawasaki K."/>
            <person name="Sasaki T."/>
            <person name="Asakawa S."/>
            <person name="Kudoh J."/>
            <person name="Shintani A."/>
            <person name="Shibuya K."/>
            <person name="Yoshizaki Y."/>
            <person name="Aoki N."/>
            <person name="Mitsuyama S."/>
            <person name="Roe B.A."/>
            <person name="Chen F."/>
            <person name="Chu L."/>
            <person name="Crabtree J."/>
            <person name="Deschamps S."/>
            <person name="Do A."/>
            <person name="Do T."/>
            <person name="Dorman A."/>
            <person name="Fang F."/>
            <person name="Fu Y."/>
            <person name="Hu P."/>
            <person name="Hua A."/>
            <person name="Kenton S."/>
            <person name="Lai H."/>
            <person name="Lao H.I."/>
            <person name="Lewis J."/>
            <person name="Lewis S."/>
            <person name="Lin S.-P."/>
            <person name="Loh P."/>
            <person name="Malaj E."/>
            <person name="Nguyen T."/>
            <person name="Pan H."/>
            <person name="Phan S."/>
            <person name="Qi S."/>
            <person name="Qian Y."/>
            <person name="Ray L."/>
            <person name="Ren Q."/>
            <person name="Shaull S."/>
            <person name="Sloan D."/>
            <person name="Song L."/>
            <person name="Wang Q."/>
            <person name="Wang Y."/>
            <person name="Wang Z."/>
            <person name="White J."/>
            <person name="Willingham D."/>
            <person name="Wu H."/>
            <person name="Yao Z."/>
            <person name="Zhan M."/>
            <person name="Zhang G."/>
            <person name="Chissoe S."/>
            <person name="Murray J."/>
            <person name="Miller N."/>
            <person name="Minx P."/>
            <person name="Fulton R."/>
            <person name="Johnson D."/>
            <person name="Bemis G."/>
            <person name="Bentley D."/>
            <person name="Bradshaw H."/>
            <person name="Bourne S."/>
            <person name="Cordes M."/>
            <person name="Du Z."/>
            <person name="Fulton L."/>
            <person name="Goela D."/>
            <person name="Graves T."/>
            <person name="Hawkins J."/>
            <person name="Hinds K."/>
            <person name="Kemp K."/>
            <person name="Latreille P."/>
            <person name="Layman D."/>
            <person name="Ozersky P."/>
            <person name="Rohlfing T."/>
            <person name="Scheet P."/>
            <person name="Walker C."/>
            <person name="Wamsley A."/>
            <person name="Wohldmann P."/>
            <person name="Pepin K."/>
            <person name="Nelson J."/>
            <person name="Korf I."/>
            <person name="Bedell J.A."/>
            <person name="Hillier L.W."/>
            <person name="Mardis E."/>
            <person name="Waterston R."/>
            <person name="Wilson R."/>
            <person name="Emanuel B.S."/>
            <person name="Shaikh T."/>
            <person name="Kurahashi H."/>
            <person name="Saitta S."/>
            <person name="Budarf M.L."/>
            <person name="McDermid H.E."/>
            <person name="Johnson A."/>
            <person name="Wong A.C.C."/>
            <person name="Morrow B.E."/>
            <person name="Edelmann L."/>
            <person name="Kim U.J."/>
            <person name="Shizuya H."/>
            <person name="Simon M.I."/>
            <person name="Dumanski J.P."/>
            <person name="Peyrard M."/>
            <person name="Kedra D."/>
            <person name="Seroussi E."/>
            <person name="Fransson I."/>
            <person name="Tapia I."/>
            <person name="Bruder C.E."/>
            <person name="O'Brien K.P."/>
            <person name="Wilkinson P."/>
            <person name="Bodenteich A."/>
            <person name="Hartman K."/>
            <person name="Hu X."/>
            <person name="Khan A.S."/>
            <person name="Lane L."/>
            <person name="Tilahun Y."/>
            <person name="Wright H."/>
        </authorList>
    </citation>
    <scope>NUCLEOTIDE SEQUENCE [LARGE SCALE GENOMIC DNA]</scope>
</reference>
<reference key="2">
    <citation type="submission" date="2005-07" db="EMBL/GenBank/DDBJ databases">
        <authorList>
            <person name="Mural R.J."/>
            <person name="Istrail S."/>
            <person name="Sutton G.G."/>
            <person name="Florea L."/>
            <person name="Halpern A.L."/>
            <person name="Mobarry C.M."/>
            <person name="Lippert R."/>
            <person name="Walenz B."/>
            <person name="Shatkay H."/>
            <person name="Dew I."/>
            <person name="Miller J.R."/>
            <person name="Flanigan M.J."/>
            <person name="Edwards N.J."/>
            <person name="Bolanos R."/>
            <person name="Fasulo D."/>
            <person name="Halldorsson B.V."/>
            <person name="Hannenhalli S."/>
            <person name="Turner R."/>
            <person name="Yooseph S."/>
            <person name="Lu F."/>
            <person name="Nusskern D.R."/>
            <person name="Shue B.C."/>
            <person name="Zheng X.H."/>
            <person name="Zhong F."/>
            <person name="Delcher A.L."/>
            <person name="Huson D.H."/>
            <person name="Kravitz S.A."/>
            <person name="Mouchard L."/>
            <person name="Reinert K."/>
            <person name="Remington K.A."/>
            <person name="Clark A.G."/>
            <person name="Waterman M.S."/>
            <person name="Eichler E.E."/>
            <person name="Adams M.D."/>
            <person name="Hunkapiller M.W."/>
            <person name="Myers E.W."/>
            <person name="Venter J.C."/>
        </authorList>
    </citation>
    <scope>NUCLEOTIDE SEQUENCE [LARGE SCALE GENOMIC DNA]</scope>
</reference>
<evidence type="ECO:0000256" key="1">
    <source>
        <dbReference type="SAM" id="MobiDB-lite"/>
    </source>
</evidence>
<evidence type="ECO:0000305" key="2"/>
<evidence type="ECO:0000312" key="3">
    <source>
        <dbReference type="HGNC" id="HGNC:53893"/>
    </source>
</evidence>
<accession>A0A024R1R8</accession>
<proteinExistence type="inferred from homology"/>
<name>TMA7B_HUMAN</name>
<feature type="chain" id="PRO_0000457385" description="Translation machinery-associated protein 7B">
    <location>
        <begin position="1"/>
        <end position="64"/>
    </location>
</feature>
<feature type="region of interest" description="Disordered" evidence="1">
    <location>
        <begin position="1"/>
        <end position="38"/>
    </location>
</feature>
<feature type="compositionally biased region" description="Basic and acidic residues" evidence="1">
    <location>
        <begin position="27"/>
        <end position="38"/>
    </location>
</feature>
<dbReference type="EMBL" id="Z82206">
    <property type="status" value="NOT_ANNOTATED_CDS"/>
    <property type="molecule type" value="Genomic_DNA"/>
</dbReference>
<dbReference type="EMBL" id="CH471095">
    <property type="protein sequence ID" value="EAW60362.1"/>
    <property type="molecule type" value="Genomic_DNA"/>
</dbReference>
<dbReference type="EMBL" id="CH471095">
    <property type="protein sequence ID" value="EAW60363.1"/>
    <property type="molecule type" value="Genomic_DNA"/>
</dbReference>
<dbReference type="CCDS" id="CCDS93168.1"/>
<dbReference type="RefSeq" id="NP_001382942.1">
    <property type="nucleotide sequence ID" value="NM_001396013.1"/>
</dbReference>
<dbReference type="SMR" id="A0A024R1R8"/>
<dbReference type="FunCoup" id="A0A024R1R8">
    <property type="interactions" value="40"/>
</dbReference>
<dbReference type="STRING" id="9606.ENSP00000491117"/>
<dbReference type="BioMuta" id="ENSG00000225528"/>
<dbReference type="jPOST" id="A0A024R1R8"/>
<dbReference type="MassIVE" id="A0A024R1R8"/>
<dbReference type="PeptideAtlas" id="A0A024R1R8"/>
<dbReference type="Ensembl" id="ENST00000424496.3">
    <property type="protein sequence ID" value="ENSP00000491117.1"/>
    <property type="gene ID" value="ENSG00000225528.4"/>
</dbReference>
<dbReference type="GeneID" id="112268293"/>
<dbReference type="MANE-Select" id="ENST00000424496.3">
    <property type="protein sequence ID" value="ENSP00000491117.1"/>
    <property type="RefSeq nucleotide sequence ID" value="NM_001396013.1"/>
    <property type="RefSeq protein sequence ID" value="NP_001382942.1"/>
</dbReference>
<dbReference type="AGR" id="HGNC:53893"/>
<dbReference type="GeneCards" id="TMA7B"/>
<dbReference type="HGNC" id="HGNC:53893">
    <property type="gene designation" value="TMA7B"/>
</dbReference>
<dbReference type="OpenTargets" id="ENSG00000225528"/>
<dbReference type="VEuPathDB" id="HostDB:ENSG00000225528"/>
<dbReference type="GeneTree" id="ENSGT00390000003710"/>
<dbReference type="InParanoid" id="A0A024R1R8"/>
<dbReference type="OMA" id="QAKEMDT"/>
<dbReference type="PAN-GO" id="A0A024R1R8">
    <property type="GO annotations" value="0 GO annotations based on evolutionary models"/>
</dbReference>
<dbReference type="PRO" id="PR:A0A024R1R8"/>
<dbReference type="Proteomes" id="UP000005640">
    <property type="component" value="Chromosome 22"/>
</dbReference>
<dbReference type="RNAct" id="A0A024R1R8">
    <property type="molecule type" value="protein"/>
</dbReference>
<dbReference type="Bgee" id="ENSG00000225528">
    <property type="expression patterns" value="Expressed in monocyte and 42 other cell types or tissues"/>
</dbReference>
<dbReference type="InterPro" id="IPR015157">
    <property type="entry name" value="TMA7"/>
</dbReference>
<dbReference type="PANTHER" id="PTHR28632">
    <property type="entry name" value="TRANSLATION MACHINERY-ASSOCIATED PROTEIN 7"/>
    <property type="match status" value="1"/>
</dbReference>
<dbReference type="Pfam" id="PF09072">
    <property type="entry name" value="TMA7"/>
    <property type="match status" value="1"/>
</dbReference>
<gene>
    <name evidence="3" type="primary">TMA7B</name>
</gene>
<organism>
    <name type="scientific">Homo sapiens</name>
    <name type="common">Human</name>
    <dbReference type="NCBI Taxonomy" id="9606"/>
    <lineage>
        <taxon>Eukaryota</taxon>
        <taxon>Metazoa</taxon>
        <taxon>Chordata</taxon>
        <taxon>Craniata</taxon>
        <taxon>Vertebrata</taxon>
        <taxon>Euteleostomi</taxon>
        <taxon>Mammalia</taxon>
        <taxon>Eutheria</taxon>
        <taxon>Euarchontoglires</taxon>
        <taxon>Primates</taxon>
        <taxon>Haplorrhini</taxon>
        <taxon>Catarrhini</taxon>
        <taxon>Hominidae</taxon>
        <taxon>Homo</taxon>
    </lineage>
</organism>
<sequence>MSSHEGGKKKALKQPKKQAKEMDEEEKAFKQKQKEEQKKLEVLKAKVVGKGPLATGGIKKSGKK</sequence>